<keyword id="KW-1035">Host cytoplasm</keyword>
<keyword id="KW-1048">Host nucleus</keyword>
<keyword id="KW-0378">Hydrolase</keyword>
<keyword id="KW-1185">Reference proteome</keyword>
<keyword id="KW-0964">Secreted</keyword>
<keyword id="KW-0843">Virulence</keyword>
<dbReference type="EC" id="3.3.2.1" evidence="1"/>
<dbReference type="EMBL" id="DS572703">
    <property type="protein sequence ID" value="EGY23665.1"/>
    <property type="molecule type" value="Genomic_DNA"/>
</dbReference>
<dbReference type="RefSeq" id="XP_009653134.1">
    <property type="nucleotide sequence ID" value="XM_009654839.1"/>
</dbReference>
<dbReference type="SMR" id="G2X4M1"/>
<dbReference type="STRING" id="498257.G2X4M1"/>
<dbReference type="EnsemblFungi" id="EGY23665">
    <property type="protein sequence ID" value="EGY23665"/>
    <property type="gene ID" value="VDAG_05103"/>
</dbReference>
<dbReference type="GeneID" id="20706566"/>
<dbReference type="KEGG" id="vda:VDAG_05103"/>
<dbReference type="eggNOG" id="ENOG502RXWW">
    <property type="taxonomic scope" value="Eukaryota"/>
</dbReference>
<dbReference type="HOGENOM" id="CLU_068979_5_1_1"/>
<dbReference type="InParanoid" id="G2X4M1"/>
<dbReference type="OMA" id="TGMMTHM"/>
<dbReference type="OrthoDB" id="11696at1028384"/>
<dbReference type="Proteomes" id="UP000001611">
    <property type="component" value="Chromosome 4"/>
</dbReference>
<dbReference type="GO" id="GO:0005576">
    <property type="term" value="C:extracellular region"/>
    <property type="evidence" value="ECO:0007669"/>
    <property type="project" value="UniProtKB-SubCell"/>
</dbReference>
<dbReference type="GO" id="GO:0030430">
    <property type="term" value="C:host cell cytoplasm"/>
    <property type="evidence" value="ECO:0007669"/>
    <property type="project" value="UniProtKB-SubCell"/>
</dbReference>
<dbReference type="GO" id="GO:0042025">
    <property type="term" value="C:host cell nucleus"/>
    <property type="evidence" value="ECO:0007669"/>
    <property type="project" value="UniProtKB-SubCell"/>
</dbReference>
<dbReference type="GO" id="GO:0008908">
    <property type="term" value="F:isochorismatase activity"/>
    <property type="evidence" value="ECO:0000314"/>
    <property type="project" value="UniProtKB"/>
</dbReference>
<dbReference type="GO" id="GO:0140403">
    <property type="term" value="P:effector-mediated suppression of host innate immune response"/>
    <property type="evidence" value="ECO:0000314"/>
    <property type="project" value="UniProtKB"/>
</dbReference>
<dbReference type="CDD" id="cd01014">
    <property type="entry name" value="nicotinamidase_related"/>
    <property type="match status" value="1"/>
</dbReference>
<dbReference type="Gene3D" id="3.40.50.850">
    <property type="entry name" value="Isochorismatase-like"/>
    <property type="match status" value="1"/>
</dbReference>
<dbReference type="InterPro" id="IPR000868">
    <property type="entry name" value="Isochorismatase-like_dom"/>
</dbReference>
<dbReference type="InterPro" id="IPR050272">
    <property type="entry name" value="Isochorismatase-like_hydrls"/>
</dbReference>
<dbReference type="InterPro" id="IPR036380">
    <property type="entry name" value="Isochorismatase-like_sf"/>
</dbReference>
<dbReference type="PANTHER" id="PTHR43540:SF15">
    <property type="entry name" value="BLR5631 PROTEIN"/>
    <property type="match status" value="1"/>
</dbReference>
<dbReference type="PANTHER" id="PTHR43540">
    <property type="entry name" value="PEROXYUREIDOACRYLATE/UREIDOACRYLATE AMIDOHYDROLASE-RELATED"/>
    <property type="match status" value="1"/>
</dbReference>
<dbReference type="Pfam" id="PF00857">
    <property type="entry name" value="Isochorismatase"/>
    <property type="match status" value="1"/>
</dbReference>
<dbReference type="SUPFAM" id="SSF52499">
    <property type="entry name" value="Isochorismatase-like hydrolases"/>
    <property type="match status" value="1"/>
</dbReference>
<reference key="1">
    <citation type="journal article" date="2011" name="PLoS Pathog.">
        <title>Comparative genomics yields insights into niche adaptation of plant vascular wilt pathogens.</title>
        <authorList>
            <person name="Klosterman S.J."/>
            <person name="Subbarao K.V."/>
            <person name="Kang S."/>
            <person name="Veronese P."/>
            <person name="Gold S.E."/>
            <person name="Thomma B.P.H.J."/>
            <person name="Chen Z."/>
            <person name="Henrissat B."/>
            <person name="Lee Y.-H."/>
            <person name="Park J."/>
            <person name="Garcia-Pedrajas M.D."/>
            <person name="Barbara D.J."/>
            <person name="Anchieta A."/>
            <person name="de Jonge R."/>
            <person name="Santhanam P."/>
            <person name="Maruthachalam K."/>
            <person name="Atallah Z."/>
            <person name="Amyotte S.G."/>
            <person name="Paz Z."/>
            <person name="Inderbitzin P."/>
            <person name="Hayes R.J."/>
            <person name="Heiman D.I."/>
            <person name="Young S."/>
            <person name="Zeng Q."/>
            <person name="Engels R."/>
            <person name="Galagan J."/>
            <person name="Cuomo C.A."/>
            <person name="Dobinson K.F."/>
            <person name="Ma L.-J."/>
        </authorList>
    </citation>
    <scope>NUCLEOTIDE SEQUENCE [LARGE SCALE GENOMIC DNA]</scope>
    <source>
        <strain>VdLs.17 / ATCC MYA-4575 / FGSC 10137</strain>
    </source>
</reference>
<reference key="2">
    <citation type="journal article" date="2014" name="Nat. Commun.">
        <title>Unconventionally secreted effectors of two filamentous pathogens target plant salicylate biosynthesis.</title>
        <authorList>
            <person name="Liu T."/>
            <person name="Song T."/>
            <person name="Zhang X."/>
            <person name="Yuan H."/>
            <person name="Su L."/>
            <person name="Li W."/>
            <person name="Xu J."/>
            <person name="Liu S."/>
            <person name="Chen L."/>
            <person name="Chen T."/>
            <person name="Zhang M."/>
            <person name="Gu L."/>
            <person name="Zhang B."/>
            <person name="Dou D."/>
        </authorList>
    </citation>
    <scope>INDUCTION</scope>
    <scope>DISRUPTION PHENOTYPE</scope>
    <scope>FUNCTION</scope>
    <scope>ACTIVE SITE</scope>
    <scope>MUTAGENESIS OF ASP-26; LYS-100 AND CYS-133</scope>
    <scope>CATALYTIC ACTIVITY</scope>
    <scope>SUBCELLULAR LOCATION</scope>
</reference>
<accession>G2X4M1</accession>
<sequence>MSSFRSMLGVPPSTASTQDSVLVIIDAQGEYAEGKLKISNIEASRPNISSLLEKYRAANAPIVHVVHETPAGAPLFTQGTKLAEIFDELTPKEGEAVVTKHHPGSFADTNLQEILEKSGKKKIVLVGYMAHVCVSTTARQGAQRGWDVIVAEDAVGDRDIPGVDAAQLVKVALAEIADVFGTLVSSKDIN</sequence>
<feature type="chain" id="PRO_0000448093" description="Secreted isochorismatase effector Isc1">
    <location>
        <begin position="1"/>
        <end position="190"/>
    </location>
</feature>
<feature type="active site" evidence="1">
    <location>
        <position position="26"/>
    </location>
</feature>
<feature type="active site" evidence="1">
    <location>
        <position position="100"/>
    </location>
</feature>
<feature type="active site" evidence="1">
    <location>
        <position position="133"/>
    </location>
</feature>
<feature type="mutagenesis site" description="Impairs the isochorismatase activity and reduces the virulence; when associated with A-100 and A-133." evidence="1">
    <original>D</original>
    <variation>A</variation>
    <location>
        <position position="26"/>
    </location>
</feature>
<feature type="mutagenesis site" description="Impairs the isochorismatase activity and reduces the virulence; when associated with A-26 and A-133." evidence="1">
    <original>K</original>
    <variation>A</variation>
    <location>
        <position position="100"/>
    </location>
</feature>
<feature type="mutagenesis site" description="Impairs the isochorismatase activity and reduces the virulence; when associated with A-26 and A-100." evidence="1">
    <original>C</original>
    <variation>A</variation>
    <location>
        <position position="133"/>
    </location>
</feature>
<proteinExistence type="evidence at protein level"/>
<organism>
    <name type="scientific">Verticillium dahliae (strain VdLs.17 / ATCC MYA-4575 / FGSC 10137)</name>
    <name type="common">Verticillium wilt</name>
    <dbReference type="NCBI Taxonomy" id="498257"/>
    <lineage>
        <taxon>Eukaryota</taxon>
        <taxon>Fungi</taxon>
        <taxon>Dikarya</taxon>
        <taxon>Ascomycota</taxon>
        <taxon>Pezizomycotina</taxon>
        <taxon>Sordariomycetes</taxon>
        <taxon>Hypocreomycetidae</taxon>
        <taxon>Glomerellales</taxon>
        <taxon>Plectosphaerellaceae</taxon>
        <taxon>Verticillium</taxon>
    </lineage>
</organism>
<gene>
    <name evidence="2" type="primary">Isc1</name>
    <name type="ORF">VDAG_05103</name>
</gene>
<evidence type="ECO:0000269" key="1">
    <source>
    </source>
</evidence>
<evidence type="ECO:0000303" key="2">
    <source>
    </source>
</evidence>
<evidence type="ECO:0000305" key="3"/>
<name>ISC1_VERDV</name>
<comment type="function">
    <text evidence="1">Secreted isochorismatase required for full virulence of V.dahliae (PubMed:25156390). Suppresses salicylate-mediated innate immunity of the host by disrupting the plant salicylate metabolism pathway via hydrolysis of its isochorismate precursor (PubMed:25156390).</text>
</comment>
<comment type="catalytic activity">
    <reaction evidence="1">
        <text>isochorismate + H2O = (2S,3S)-2,3-dihydroxy-2,3-dihydrobenzoate + pyruvate</text>
        <dbReference type="Rhea" id="RHEA:11112"/>
        <dbReference type="ChEBI" id="CHEBI:15361"/>
        <dbReference type="ChEBI" id="CHEBI:15377"/>
        <dbReference type="ChEBI" id="CHEBI:29780"/>
        <dbReference type="ChEBI" id="CHEBI:58764"/>
        <dbReference type="EC" id="3.3.2.1"/>
    </reaction>
</comment>
<comment type="subcellular location">
    <subcellularLocation>
        <location evidence="1">Secreted</location>
    </subcellularLocation>
    <subcellularLocation>
        <location evidence="1">Host cytoplasm</location>
    </subcellularLocation>
    <subcellularLocation>
        <location evidence="1">Host nucleus</location>
    </subcellularLocation>
    <text evidence="1">Lacks a signal peptide and uses an unconventional secretion pathway for delivering effectors which plays an important role in host-pathogen interactions.</text>
</comment>
<comment type="induction">
    <text evidence="1">Expression is up-regulated during the infection stages.</text>
</comment>
<comment type="disruption phenotype">
    <text evidence="1">Leads to a significant reduction in virulence and increased the concentrations of both free salicylate and its glucoside (SAG) by 100-150% in inoculated cotton plants.</text>
</comment>
<comment type="similarity">
    <text evidence="3">Belongs to the isochorismatase family.</text>
</comment>
<protein>
    <recommendedName>
        <fullName evidence="2">Secreted isochorismatase effector Isc1</fullName>
        <ecNumber evidence="1">3.3.2.1</ecNumber>
    </recommendedName>
</protein>